<organism>
    <name type="scientific">Boana raniceps</name>
    <name type="common">Chaco tree frog</name>
    <name type="synonym">Hyla roeschmanni</name>
    <dbReference type="NCBI Taxonomy" id="192750"/>
    <lineage>
        <taxon>Eukaryota</taxon>
        <taxon>Metazoa</taxon>
        <taxon>Chordata</taxon>
        <taxon>Craniata</taxon>
        <taxon>Vertebrata</taxon>
        <taxon>Euteleostomi</taxon>
        <taxon>Amphibia</taxon>
        <taxon>Batrachia</taxon>
        <taxon>Anura</taxon>
        <taxon>Neobatrachia</taxon>
        <taxon>Hyloidea</taxon>
        <taxon>Hylidae</taxon>
        <taxon>Hylinae</taxon>
        <taxon>Cophomantini</taxon>
        <taxon>Boana</taxon>
    </lineage>
</organism>
<evidence type="ECO:0000250" key="1">
    <source>
        <dbReference type="UniProtKB" id="P86037"/>
    </source>
</evidence>
<evidence type="ECO:0000255" key="2"/>
<evidence type="ECO:0000269" key="3">
    <source>
    </source>
</evidence>
<evidence type="ECO:0000303" key="4">
    <source>
    </source>
</evidence>
<evidence type="ECO:0000305" key="5"/>
<dbReference type="GO" id="GO:0005576">
    <property type="term" value="C:extracellular region"/>
    <property type="evidence" value="ECO:0007669"/>
    <property type="project" value="UniProtKB-SubCell"/>
</dbReference>
<dbReference type="GO" id="GO:0042742">
    <property type="term" value="P:defense response to bacterium"/>
    <property type="evidence" value="ECO:0007669"/>
    <property type="project" value="UniProtKB-KW"/>
</dbReference>
<dbReference type="InterPro" id="IPR004275">
    <property type="entry name" value="Frog_antimicrobial_propeptide"/>
</dbReference>
<dbReference type="InterPro" id="IPR016322">
    <property type="entry name" value="FSAP"/>
</dbReference>
<dbReference type="Pfam" id="PF03032">
    <property type="entry name" value="FSAP_sig_propep"/>
    <property type="match status" value="1"/>
</dbReference>
<dbReference type="PIRSF" id="PIRSF001822">
    <property type="entry name" value="Dermaseptin_precursor"/>
    <property type="match status" value="1"/>
</dbReference>
<accession>P86187</accession>
<reference evidence="5" key="1">
    <citation type="journal article" date="2008" name="Biochem. Biophys. Res. Commun.">
        <title>Post-secretory events alter the peptide content of the skin secretion of Hypsiboas raniceps.</title>
        <authorList>
            <person name="Magalhaes B.S."/>
            <person name="Melo J.A.T."/>
            <person name="Leite J.R.S.A."/>
            <person name="Silva L.P."/>
            <person name="Prates M.V."/>
            <person name="Vinecky F."/>
            <person name="Barbosa E.A."/>
            <person name="Verly R.M."/>
            <person name="Mehta A."/>
            <person name="Nicoli J.R."/>
            <person name="Bemquerer M.P."/>
            <person name="Andrade A.C."/>
            <person name="Bloch C. Jr."/>
        </authorList>
    </citation>
    <scope>NUCLEOTIDE SEQUENCE [MRNA]</scope>
    <source>
        <tissue evidence="3">Skin</tissue>
    </source>
</reference>
<feature type="signal peptide" evidence="2">
    <location>
        <begin position="1"/>
        <end position="22"/>
    </location>
</feature>
<feature type="propeptide" id="PRO_0000371445" evidence="1">
    <location>
        <begin position="23"/>
        <end position="49"/>
    </location>
</feature>
<feature type="peptide" id="PRO_0000371446" description="Raniseptin-5" evidence="1">
    <location>
        <begin position="52"/>
        <end position="80"/>
    </location>
</feature>
<keyword id="KW-0878">Amphibian defense peptide</keyword>
<keyword id="KW-0044">Antibiotic</keyword>
<keyword id="KW-0929">Antimicrobial</keyword>
<keyword id="KW-0165">Cleavage on pair of basic residues</keyword>
<keyword id="KW-0964">Secreted</keyword>
<keyword id="KW-0732">Signal</keyword>
<proteinExistence type="inferred from homology"/>
<name>RNSP5_BOARA</name>
<protein>
    <recommendedName>
        <fullName evidence="4">Raniseptin-5</fullName>
        <shortName evidence="4">Rsp-5</shortName>
    </recommendedName>
</protein>
<comment type="function">
    <text evidence="1">Has antibacterial activity.</text>
</comment>
<comment type="subcellular location">
    <subcellularLocation>
        <location evidence="5">Secreted</location>
    </subcellularLocation>
</comment>
<comment type="tissue specificity">
    <text evidence="5">Expressed by the skin glands.</text>
</comment>
<comment type="similarity">
    <text evidence="2">Belongs to the frog skin active peptide (FSAP) family. Dermaseptin subfamily.</text>
</comment>
<sequence>MAFLKKSLFLVLFLGIVSLSICEEEKREGEEEEKQEEENEELSEEELREKRAWLDKLKNLGKVVGKVALGVVQNYLNPRQ</sequence>